<sequence>MESRPSGRQHASEGDGDQSPTQCAGMRSSGRSDQPYVLKGNPLLLRVRCYSGCASGSGRQLQLSVFQDLNQFSHCRVWRSPALIVKGEPPWCSQQDTQSPFQTGTPLERPCFRMKLSGWELTKNAQRALGSKLQHILSLDSTQACGAGGPTILRPPRAP</sequence>
<dbReference type="EMBL" id="AK057831">
    <property type="protein sequence ID" value="BAB71592.1"/>
    <property type="molecule type" value="mRNA"/>
</dbReference>
<dbReference type="EMBL" id="BC093999">
    <property type="protein sequence ID" value="AAH93999.1"/>
    <property type="molecule type" value="mRNA"/>
</dbReference>
<dbReference type="EMBL" id="BC094001">
    <property type="protein sequence ID" value="AAH94001.1"/>
    <property type="molecule type" value="mRNA"/>
</dbReference>
<dbReference type="RefSeq" id="NP_872432.1">
    <property type="nucleotide sequence ID" value="NM_182626.3"/>
</dbReference>
<dbReference type="BioGRID" id="131528">
    <property type="interactions" value="45"/>
</dbReference>
<dbReference type="FunCoup" id="Q96LS8">
    <property type="interactions" value="8"/>
</dbReference>
<dbReference type="IntAct" id="Q96LS8">
    <property type="interactions" value="8"/>
</dbReference>
<dbReference type="iPTMnet" id="Q96LS8"/>
<dbReference type="PhosphoSitePlus" id="Q96LS8"/>
<dbReference type="BioMuta" id="HGNC:26322"/>
<dbReference type="DMDM" id="74732249"/>
<dbReference type="PaxDb" id="9606-ENSP00000482286"/>
<dbReference type="AGR" id="HGNC:10452"/>
<dbReference type="neXtProt" id="NX_Q96LS8"/>
<dbReference type="eggNOG" id="ENOG502TDYA">
    <property type="taxonomic scope" value="Eukaryota"/>
</dbReference>
<dbReference type="InParanoid" id="Q96LS8"/>
<dbReference type="PAN-GO" id="Q96LS8">
    <property type="GO annotations" value="0 GO annotations based on evolutionary models"/>
</dbReference>
<dbReference type="PhylomeDB" id="Q96LS8"/>
<dbReference type="PathwayCommons" id="Q96LS8"/>
<dbReference type="SignaLink" id="Q96LS8"/>
<dbReference type="BioGRID-ORCS" id="348738">
    <property type="hits" value="10 hits in 1112 CRISPR screens"/>
</dbReference>
<dbReference type="ChiTaRS" id="C2orf48">
    <property type="organism name" value="human"/>
</dbReference>
<dbReference type="GenomeRNAi" id="348738"/>
<dbReference type="Pharos" id="Q96LS8">
    <property type="development level" value="Tdark"/>
</dbReference>
<dbReference type="Proteomes" id="UP000005640">
    <property type="component" value="Unplaced"/>
</dbReference>
<dbReference type="RNAct" id="Q96LS8">
    <property type="molecule type" value="protein"/>
</dbReference>
<keyword id="KW-1185">Reference proteome</keyword>
<name>CB048_HUMAN</name>
<protein>
    <recommendedName>
        <fullName evidence="2">Putative uncharacterized protein C2orf48</fullName>
    </recommendedName>
</protein>
<reference key="1">
    <citation type="journal article" date="2004" name="Nat. Genet.">
        <title>Complete sequencing and characterization of 21,243 full-length human cDNAs.</title>
        <authorList>
            <person name="Ota T."/>
            <person name="Suzuki Y."/>
            <person name="Nishikawa T."/>
            <person name="Otsuki T."/>
            <person name="Sugiyama T."/>
            <person name="Irie R."/>
            <person name="Wakamatsu A."/>
            <person name="Hayashi K."/>
            <person name="Sato H."/>
            <person name="Nagai K."/>
            <person name="Kimura K."/>
            <person name="Makita H."/>
            <person name="Sekine M."/>
            <person name="Obayashi M."/>
            <person name="Nishi T."/>
            <person name="Shibahara T."/>
            <person name="Tanaka T."/>
            <person name="Ishii S."/>
            <person name="Yamamoto J."/>
            <person name="Saito K."/>
            <person name="Kawai Y."/>
            <person name="Isono Y."/>
            <person name="Nakamura Y."/>
            <person name="Nagahari K."/>
            <person name="Murakami K."/>
            <person name="Yasuda T."/>
            <person name="Iwayanagi T."/>
            <person name="Wagatsuma M."/>
            <person name="Shiratori A."/>
            <person name="Sudo H."/>
            <person name="Hosoiri T."/>
            <person name="Kaku Y."/>
            <person name="Kodaira H."/>
            <person name="Kondo H."/>
            <person name="Sugawara M."/>
            <person name="Takahashi M."/>
            <person name="Kanda K."/>
            <person name="Yokoi T."/>
            <person name="Furuya T."/>
            <person name="Kikkawa E."/>
            <person name="Omura Y."/>
            <person name="Abe K."/>
            <person name="Kamihara K."/>
            <person name="Katsuta N."/>
            <person name="Sato K."/>
            <person name="Tanikawa M."/>
            <person name="Yamazaki M."/>
            <person name="Ninomiya K."/>
            <person name="Ishibashi T."/>
            <person name="Yamashita H."/>
            <person name="Murakawa K."/>
            <person name="Fujimori K."/>
            <person name="Tanai H."/>
            <person name="Kimata M."/>
            <person name="Watanabe M."/>
            <person name="Hiraoka S."/>
            <person name="Chiba Y."/>
            <person name="Ishida S."/>
            <person name="Ono Y."/>
            <person name="Takiguchi S."/>
            <person name="Watanabe S."/>
            <person name="Yosida M."/>
            <person name="Hotuta T."/>
            <person name="Kusano J."/>
            <person name="Kanehori K."/>
            <person name="Takahashi-Fujii A."/>
            <person name="Hara H."/>
            <person name="Tanase T.-O."/>
            <person name="Nomura Y."/>
            <person name="Togiya S."/>
            <person name="Komai F."/>
            <person name="Hara R."/>
            <person name="Takeuchi K."/>
            <person name="Arita M."/>
            <person name="Imose N."/>
            <person name="Musashino K."/>
            <person name="Yuuki H."/>
            <person name="Oshima A."/>
            <person name="Sasaki N."/>
            <person name="Aotsuka S."/>
            <person name="Yoshikawa Y."/>
            <person name="Matsunawa H."/>
            <person name="Ichihara T."/>
            <person name="Shiohata N."/>
            <person name="Sano S."/>
            <person name="Moriya S."/>
            <person name="Momiyama H."/>
            <person name="Satoh N."/>
            <person name="Takami S."/>
            <person name="Terashima Y."/>
            <person name="Suzuki O."/>
            <person name="Nakagawa S."/>
            <person name="Senoh A."/>
            <person name="Mizoguchi H."/>
            <person name="Goto Y."/>
            <person name="Shimizu F."/>
            <person name="Wakebe H."/>
            <person name="Hishigaki H."/>
            <person name="Watanabe T."/>
            <person name="Sugiyama A."/>
            <person name="Takemoto M."/>
            <person name="Kawakami B."/>
            <person name="Yamazaki M."/>
            <person name="Watanabe K."/>
            <person name="Kumagai A."/>
            <person name="Itakura S."/>
            <person name="Fukuzumi Y."/>
            <person name="Fujimori Y."/>
            <person name="Komiyama M."/>
            <person name="Tashiro H."/>
            <person name="Tanigami A."/>
            <person name="Fujiwara T."/>
            <person name="Ono T."/>
            <person name="Yamada K."/>
            <person name="Fujii Y."/>
            <person name="Ozaki K."/>
            <person name="Hirao M."/>
            <person name="Ohmori Y."/>
            <person name="Kawabata A."/>
            <person name="Hikiji T."/>
            <person name="Kobatake N."/>
            <person name="Inagaki H."/>
            <person name="Ikema Y."/>
            <person name="Okamoto S."/>
            <person name="Okitani R."/>
            <person name="Kawakami T."/>
            <person name="Noguchi S."/>
            <person name="Itoh T."/>
            <person name="Shigeta K."/>
            <person name="Senba T."/>
            <person name="Matsumura K."/>
            <person name="Nakajima Y."/>
            <person name="Mizuno T."/>
            <person name="Morinaga M."/>
            <person name="Sasaki M."/>
            <person name="Togashi T."/>
            <person name="Oyama M."/>
            <person name="Hata H."/>
            <person name="Watanabe M."/>
            <person name="Komatsu T."/>
            <person name="Mizushima-Sugano J."/>
            <person name="Satoh T."/>
            <person name="Shirai Y."/>
            <person name="Takahashi Y."/>
            <person name="Nakagawa K."/>
            <person name="Okumura K."/>
            <person name="Nagase T."/>
            <person name="Nomura N."/>
            <person name="Kikuchi H."/>
            <person name="Masuho Y."/>
            <person name="Yamashita R."/>
            <person name="Nakai K."/>
            <person name="Yada T."/>
            <person name="Nakamura Y."/>
            <person name="Ohara O."/>
            <person name="Isogai T."/>
            <person name="Sugano S."/>
        </authorList>
    </citation>
    <scope>NUCLEOTIDE SEQUENCE [LARGE SCALE MRNA]</scope>
    <source>
        <tissue>Brain</tissue>
    </source>
</reference>
<reference key="2">
    <citation type="journal article" date="2004" name="Genome Res.">
        <title>The status, quality, and expansion of the NIH full-length cDNA project: the Mammalian Gene Collection (MGC).</title>
        <authorList>
            <consortium name="The MGC Project Team"/>
        </authorList>
    </citation>
    <scope>NUCLEOTIDE SEQUENCE [LARGE SCALE MRNA]</scope>
    <source>
        <tissue>Brain</tissue>
        <tissue>Heart</tissue>
        <tissue>Lung</tissue>
    </source>
</reference>
<feature type="chain" id="PRO_0000263748" description="Putative uncharacterized protein C2orf48">
    <location>
        <begin position="1"/>
        <end position="159"/>
    </location>
</feature>
<feature type="region of interest" description="Disordered" evidence="1">
    <location>
        <begin position="1"/>
        <end position="35"/>
    </location>
</feature>
<feature type="compositionally biased region" description="Basic and acidic residues" evidence="1">
    <location>
        <begin position="1"/>
        <end position="13"/>
    </location>
</feature>
<feature type="sequence variant" id="VAR_029619" description="In dbSNP:rs13406078.">
    <original>P</original>
    <variation>L</variation>
    <location>
        <position position="90"/>
    </location>
</feature>
<feature type="sequence variant" id="VAR_050713" description="In dbSNP:rs7423163.">
    <original>W</original>
    <variation>S</variation>
    <location>
        <position position="119"/>
    </location>
</feature>
<organism>
    <name type="scientific">Homo sapiens</name>
    <name type="common">Human</name>
    <dbReference type="NCBI Taxonomy" id="9606"/>
    <lineage>
        <taxon>Eukaryota</taxon>
        <taxon>Metazoa</taxon>
        <taxon>Chordata</taxon>
        <taxon>Craniata</taxon>
        <taxon>Vertebrata</taxon>
        <taxon>Euteleostomi</taxon>
        <taxon>Mammalia</taxon>
        <taxon>Eutheria</taxon>
        <taxon>Euarchontoglires</taxon>
        <taxon>Primates</taxon>
        <taxon>Haplorrhini</taxon>
        <taxon>Catarrhini</taxon>
        <taxon>Hominidae</taxon>
        <taxon>Homo</taxon>
    </lineage>
</organism>
<evidence type="ECO:0000256" key="1">
    <source>
        <dbReference type="SAM" id="MobiDB-lite"/>
    </source>
</evidence>
<evidence type="ECO:0000305" key="2"/>
<accession>Q96LS8</accession>
<proteinExistence type="uncertain"/>
<comment type="caution">
    <text evidence="2">Product of a dubious gene prediction.</text>
</comment>
<gene>
    <name type="primary">C2orf48</name>
</gene>